<keyword id="KW-0256">Endoplasmic reticulum</keyword>
<keyword id="KW-0443">Lipid metabolism</keyword>
<keyword id="KW-0472">Membrane</keyword>
<keyword id="KW-1185">Reference proteome</keyword>
<keyword id="KW-0812">Transmembrane</keyword>
<keyword id="KW-1133">Transmembrane helix</keyword>
<comment type="function">
    <text evidence="3">Plays an important role in the formation of lipid droplets (LDs) which are storage organelles at the center of lipid and energy homeostasis (By similarity). Directly binds to diacylglycerol (DAGs) and triacylglycerol (By similarity).</text>
</comment>
<comment type="subcellular location">
    <subcellularLocation>
        <location evidence="3">Endoplasmic reticulum membrane</location>
        <topology evidence="3">Multi-pass membrane protein</topology>
    </subcellularLocation>
</comment>
<comment type="similarity">
    <text evidence="3">Belongs to the FIT family. FIT1 subfamily.</text>
</comment>
<reference key="1">
    <citation type="submission" date="2008-04" db="EMBL/GenBank/DDBJ databases">
        <authorList>
            <person name="Wang J."/>
            <person name="Yang G.-Y."/>
            <person name="Li H.-J."/>
            <person name="Wang Y.-L."/>
            <person name="Zhao W.-D."/>
            <person name="Wang W.-J."/>
            <person name="Zhang Z.-Q."/>
            <person name="Tai Y.-L."/>
            <person name="Wu Y.-X."/>
            <person name="Zang M."/>
        </authorList>
    </citation>
    <scope>NUCLEOTIDE SEQUENCE [MRNA]</scope>
</reference>
<sequence length="290" mass="32164">MERGPVVGAGLGARARIRTLLGCLVKVLLWVASALLYFGSEQAARLLGSPCLRRLYHAWLAAVVIFGPLLQFHVNPRTIFASHGNFFNIKFVNSAWGWTCTFLGGFVLLVVFLATRRVAVTARHLSRLVVGAAVWRGAGRAFLLIEDLTGSCFEPLPQGLLLHELPDRRSRLAAGHQWRGYTVSSHTFLLTFCCLLMAEEAAVFAKYLAHGLPAGAPLRLVFLLNVLLLGLWNFLLLCTVIYFHQYTHKVVGAAVGTFAWYLTYGSWYHQPWSPGSPGHGLFTHPSRKHN</sequence>
<evidence type="ECO:0000250" key="1">
    <source>
        <dbReference type="UniProtKB" id="A5D6W6"/>
    </source>
</evidence>
<evidence type="ECO:0000255" key="2"/>
<evidence type="ECO:0000255" key="3">
    <source>
        <dbReference type="HAMAP-Rule" id="MF_03229"/>
    </source>
</evidence>
<evidence type="ECO:0000305" key="4"/>
<name>FITM1_PIG</name>
<gene>
    <name evidence="3" type="primary">FITM1</name>
    <name evidence="3" type="synonym">FIT1</name>
</gene>
<dbReference type="EMBL" id="EU625275">
    <property type="protein sequence ID" value="ACC85691.1"/>
    <property type="molecule type" value="mRNA"/>
</dbReference>
<dbReference type="RefSeq" id="NP_001121942.1">
    <property type="nucleotide sequence ID" value="NM_001128470.1"/>
</dbReference>
<dbReference type="FunCoup" id="B2MVP8">
    <property type="interactions" value="425"/>
</dbReference>
<dbReference type="STRING" id="9823.ENSSSCP00000002194"/>
<dbReference type="GlyGen" id="B2MVP8">
    <property type="glycosylation" value="1 site"/>
</dbReference>
<dbReference type="PaxDb" id="9823-ENSSSCP00000002194"/>
<dbReference type="GeneID" id="100147706"/>
<dbReference type="KEGG" id="ssc:100147706"/>
<dbReference type="CTD" id="161247"/>
<dbReference type="eggNOG" id="KOG3750">
    <property type="taxonomic scope" value="Eukaryota"/>
</dbReference>
<dbReference type="InParanoid" id="B2MVP8"/>
<dbReference type="OrthoDB" id="5579088at2759"/>
<dbReference type="Proteomes" id="UP000008227">
    <property type="component" value="Unplaced"/>
</dbReference>
<dbReference type="Proteomes" id="UP000314985">
    <property type="component" value="Unplaced"/>
</dbReference>
<dbReference type="Proteomes" id="UP000694570">
    <property type="component" value="Unplaced"/>
</dbReference>
<dbReference type="Proteomes" id="UP000694571">
    <property type="component" value="Unplaced"/>
</dbReference>
<dbReference type="Proteomes" id="UP000694720">
    <property type="component" value="Unplaced"/>
</dbReference>
<dbReference type="Proteomes" id="UP000694722">
    <property type="component" value="Unplaced"/>
</dbReference>
<dbReference type="Proteomes" id="UP000694723">
    <property type="component" value="Unplaced"/>
</dbReference>
<dbReference type="Proteomes" id="UP000694724">
    <property type="component" value="Unplaced"/>
</dbReference>
<dbReference type="Proteomes" id="UP000694725">
    <property type="component" value="Unplaced"/>
</dbReference>
<dbReference type="Proteomes" id="UP000694726">
    <property type="component" value="Unplaced"/>
</dbReference>
<dbReference type="Proteomes" id="UP000694727">
    <property type="component" value="Unplaced"/>
</dbReference>
<dbReference type="Proteomes" id="UP000694728">
    <property type="component" value="Unplaced"/>
</dbReference>
<dbReference type="GO" id="GO:0005789">
    <property type="term" value="C:endoplasmic reticulum membrane"/>
    <property type="evidence" value="ECO:0000318"/>
    <property type="project" value="GO_Central"/>
</dbReference>
<dbReference type="GO" id="GO:0010945">
    <property type="term" value="F:coenzyme A diphosphatase activity"/>
    <property type="evidence" value="ECO:0007669"/>
    <property type="project" value="InterPro"/>
</dbReference>
<dbReference type="GO" id="GO:0019992">
    <property type="term" value="F:diacylglycerol binding"/>
    <property type="evidence" value="ECO:0000250"/>
    <property type="project" value="UniProtKB"/>
</dbReference>
<dbReference type="GO" id="GO:0017129">
    <property type="term" value="F:triglyceride binding"/>
    <property type="evidence" value="ECO:0000250"/>
    <property type="project" value="UniProtKB"/>
</dbReference>
<dbReference type="GO" id="GO:0140042">
    <property type="term" value="P:lipid droplet formation"/>
    <property type="evidence" value="ECO:0000250"/>
    <property type="project" value="UniProtKB"/>
</dbReference>
<dbReference type="GO" id="GO:0034389">
    <property type="term" value="P:lipid droplet organization"/>
    <property type="evidence" value="ECO:0000318"/>
    <property type="project" value="GO_Central"/>
</dbReference>
<dbReference type="GO" id="GO:0019915">
    <property type="term" value="P:lipid storage"/>
    <property type="evidence" value="ECO:0000318"/>
    <property type="project" value="GO_Central"/>
</dbReference>
<dbReference type="GO" id="GO:0008654">
    <property type="term" value="P:phospholipid biosynthetic process"/>
    <property type="evidence" value="ECO:0000318"/>
    <property type="project" value="GO_Central"/>
</dbReference>
<dbReference type="HAMAP" id="MF_03229">
    <property type="entry name" value="FITM1"/>
    <property type="match status" value="1"/>
</dbReference>
<dbReference type="HAMAP" id="MF_03230">
    <property type="entry name" value="FITM2"/>
    <property type="match status" value="1"/>
</dbReference>
<dbReference type="InterPro" id="IPR019388">
    <property type="entry name" value="FIT"/>
</dbReference>
<dbReference type="InterPro" id="IPR046402">
    <property type="entry name" value="FIT1"/>
</dbReference>
<dbReference type="InterPro" id="IPR046401">
    <property type="entry name" value="FITM1/2"/>
</dbReference>
<dbReference type="PANTHER" id="PTHR23129">
    <property type="entry name" value="ACYL-COENZYME A DIPHOSPHATASE FITM2"/>
    <property type="match status" value="1"/>
</dbReference>
<dbReference type="PANTHER" id="PTHR23129:SF3">
    <property type="entry name" value="FAT STORAGE-INDUCING TRANSMEMBRANE PROTEIN 1"/>
    <property type="match status" value="1"/>
</dbReference>
<organism>
    <name type="scientific">Sus scrofa</name>
    <name type="common">Pig</name>
    <dbReference type="NCBI Taxonomy" id="9823"/>
    <lineage>
        <taxon>Eukaryota</taxon>
        <taxon>Metazoa</taxon>
        <taxon>Chordata</taxon>
        <taxon>Craniata</taxon>
        <taxon>Vertebrata</taxon>
        <taxon>Euteleostomi</taxon>
        <taxon>Mammalia</taxon>
        <taxon>Eutheria</taxon>
        <taxon>Laurasiatheria</taxon>
        <taxon>Artiodactyla</taxon>
        <taxon>Suina</taxon>
        <taxon>Suidae</taxon>
        <taxon>Sus</taxon>
    </lineage>
</organism>
<feature type="chain" id="PRO_0000350630" description="Fat storage-inducing transmembrane protein 1">
    <location>
        <begin position="1"/>
        <end position="290"/>
    </location>
</feature>
<feature type="topological domain" description="Lumenal" evidence="4">
    <location>
        <begin position="1"/>
        <end position="18"/>
    </location>
</feature>
<feature type="transmembrane region" description="Helical" evidence="2">
    <location>
        <begin position="19"/>
        <end position="39"/>
    </location>
</feature>
<feature type="topological domain" description="Cytoplasmic" evidence="4">
    <location>
        <begin position="40"/>
        <end position="54"/>
    </location>
</feature>
<feature type="transmembrane region" description="Helical" evidence="2">
    <location>
        <begin position="55"/>
        <end position="75"/>
    </location>
</feature>
<feature type="topological domain" description="Lumenal" evidence="4">
    <location>
        <begin position="76"/>
        <end position="94"/>
    </location>
</feature>
<feature type="transmembrane region" description="Helical" evidence="2">
    <location>
        <begin position="95"/>
        <end position="115"/>
    </location>
</feature>
<feature type="topological domain" description="Cytoplasmic" evidence="4">
    <location>
        <begin position="116"/>
        <end position="141"/>
    </location>
</feature>
<feature type="transmembrane region" description="Helical" evidence="2">
    <location>
        <begin position="142"/>
        <end position="162"/>
    </location>
</feature>
<feature type="topological domain" description="Lumenal" evidence="4">
    <location>
        <begin position="163"/>
        <end position="187"/>
    </location>
</feature>
<feature type="transmembrane region" description="Helical" evidence="2">
    <location>
        <begin position="188"/>
        <end position="208"/>
    </location>
</feature>
<feature type="topological domain" description="Cytoplasmic" evidence="4">
    <location>
        <begin position="209"/>
        <end position="220"/>
    </location>
</feature>
<feature type="transmembrane region" description="Helical" evidence="2">
    <location>
        <begin position="221"/>
        <end position="241"/>
    </location>
</feature>
<feature type="topological domain" description="Lumenal" evidence="4">
    <location>
        <begin position="242"/>
        <end position="249"/>
    </location>
</feature>
<feature type="transmembrane region" description="Helical" evidence="2">
    <location>
        <begin position="250"/>
        <end position="270"/>
    </location>
</feature>
<feature type="topological domain" description="Cytoplasmic" evidence="4">
    <location>
        <begin position="271"/>
        <end position="290"/>
    </location>
</feature>
<feature type="active site" evidence="3">
    <location>
        <position position="186"/>
    </location>
</feature>
<feature type="active site" evidence="3">
    <location>
        <position position="244"/>
    </location>
</feature>
<feature type="site" description="Important for catalytic activity" evidence="3">
    <location>
        <position position="248"/>
    </location>
</feature>
<accession>B2MVP8</accession>
<proteinExistence type="evidence at transcript level"/>
<protein>
    <recommendedName>
        <fullName evidence="1 3">Fat storage-inducing transmembrane protein 1</fullName>
    </recommendedName>
    <alternativeName>
        <fullName evidence="3">Fat-inducing protein 1</fullName>
    </alternativeName>
</protein>